<organism>
    <name type="scientific">Trypanosoma brucei brucei (strain 927/4 GUTat10.1)</name>
    <dbReference type="NCBI Taxonomy" id="185431"/>
    <lineage>
        <taxon>Eukaryota</taxon>
        <taxon>Discoba</taxon>
        <taxon>Euglenozoa</taxon>
        <taxon>Kinetoplastea</taxon>
        <taxon>Metakinetoplastina</taxon>
        <taxon>Trypanosomatida</taxon>
        <taxon>Trypanosomatidae</taxon>
        <taxon>Trypanosoma</taxon>
    </lineage>
</organism>
<sequence>MISYPFFSLSPPGLVPPPMAVPPVEMYSGSFWNRMRKPLPLRTQVIRFTVVFVIVSFILAVALQITHERMPDPKVTKPLPDLGFELLTKISFLSVVTDVLIAFLSSLSFFTLWKLYLLHRHCVGSGEPELPCNIPGVSRFFLSVWLCKENCRIELRNVHTIAWIRFITSYALLLLFRSLVIVMTSMPTPVDKCQNPPKIENPVKNVILTVLTAGGGSIHCGDLMYSGHTVILTLHLMFHWIYGAMVHWSFRPVVTVVAIFGYYCIVASRSHYTDDVLVAIYLTIATFIAVGHNADGAPWQLQLFIRWLPCCGANSREVTEDSQPVMVAFKSEAVDELRERDDSAGLSCEVSTNEV</sequence>
<name>SLS1_TRYB2</name>
<gene>
    <name evidence="2" type="primary">SLS1</name>
    <name type="ORF">Tb09.211.1030</name>
</gene>
<proteinExistence type="inferred from homology"/>
<protein>
    <recommendedName>
        <fullName evidence="2">Phosphatidylinositol:ceramide inositolphosphotransferase</fullName>
        <ecNumber evidence="2">2.7.8.-</ecNumber>
    </recommendedName>
    <alternativeName>
        <fullName evidence="2">Inositol-phosphorylceramide synthase</fullName>
        <shortName evidence="2">IPC synthase</shortName>
    </alternativeName>
    <alternativeName>
        <fullName evidence="2">Sphingolipid synthase</fullName>
    </alternativeName>
</protein>
<reference evidence="4" key="1">
    <citation type="journal article" date="2005" name="Science">
        <title>The genome of the African trypanosome Trypanosoma brucei.</title>
        <authorList>
            <person name="Berriman M."/>
            <person name="Ghedin E."/>
            <person name="Hertz-Fowler C."/>
            <person name="Blandin G."/>
            <person name="Renauld H."/>
            <person name="Bartholomeu D.C."/>
            <person name="Lennard N.J."/>
            <person name="Caler E."/>
            <person name="Hamlin N.E."/>
            <person name="Haas B."/>
            <person name="Bohme U."/>
            <person name="Hannick L."/>
            <person name="Aslett M.A."/>
            <person name="Shallom J."/>
            <person name="Marcello L."/>
            <person name="Hou L."/>
            <person name="Wickstead B."/>
            <person name="Alsmark U.C.M."/>
            <person name="Arrowsmith C."/>
            <person name="Atkin R.J."/>
            <person name="Barron A.J."/>
            <person name="Bringaud F."/>
            <person name="Brooks K."/>
            <person name="Carrington M."/>
            <person name="Cherevach I."/>
            <person name="Chillingworth T.J."/>
            <person name="Churcher C."/>
            <person name="Clark L.N."/>
            <person name="Corton C.H."/>
            <person name="Cronin A."/>
            <person name="Davies R.M."/>
            <person name="Doggett J."/>
            <person name="Djikeng A."/>
            <person name="Feldblyum T."/>
            <person name="Field M.C."/>
            <person name="Fraser A."/>
            <person name="Goodhead I."/>
            <person name="Hance Z."/>
            <person name="Harper D."/>
            <person name="Harris B.R."/>
            <person name="Hauser H."/>
            <person name="Hostetler J."/>
            <person name="Ivens A."/>
            <person name="Jagels K."/>
            <person name="Johnson D."/>
            <person name="Johnson J."/>
            <person name="Jones K."/>
            <person name="Kerhornou A.X."/>
            <person name="Koo H."/>
            <person name="Larke N."/>
            <person name="Landfear S."/>
            <person name="Larkin C."/>
            <person name="Leech V."/>
            <person name="Line A."/>
            <person name="Lord A."/>
            <person name="Macleod A."/>
            <person name="Mooney P.J."/>
            <person name="Moule S."/>
            <person name="Martin D.M."/>
            <person name="Morgan G.W."/>
            <person name="Mungall K."/>
            <person name="Norbertczak H."/>
            <person name="Ormond D."/>
            <person name="Pai G."/>
            <person name="Peacock C.S."/>
            <person name="Peterson J."/>
            <person name="Quail M.A."/>
            <person name="Rabbinowitsch E."/>
            <person name="Rajandream M.A."/>
            <person name="Reitter C."/>
            <person name="Salzberg S.L."/>
            <person name="Sanders M."/>
            <person name="Schobel S."/>
            <person name="Sharp S."/>
            <person name="Simmonds M."/>
            <person name="Simpson A.J."/>
            <person name="Tallon L."/>
            <person name="Turner C.M."/>
            <person name="Tait A."/>
            <person name="Tivey A.R."/>
            <person name="Van Aken S."/>
            <person name="Walker D."/>
            <person name="Wanless D."/>
            <person name="Wang S."/>
            <person name="White B."/>
            <person name="White O."/>
            <person name="Whitehead S."/>
            <person name="Woodward J."/>
            <person name="Wortman J."/>
            <person name="Adams M.D."/>
            <person name="Embley T.M."/>
            <person name="Gull K."/>
            <person name="Ullu E."/>
            <person name="Barry J.D."/>
            <person name="Fairlamb A.H."/>
            <person name="Opperdoes F."/>
            <person name="Barrell B.G."/>
            <person name="Donelson J.E."/>
            <person name="Hall N."/>
            <person name="Fraser C.M."/>
            <person name="Melville S.E."/>
            <person name="El-Sayed N.M.A."/>
        </authorList>
    </citation>
    <scope>NUCLEOTIDE SEQUENCE [LARGE SCALE GENOMIC DNA]</scope>
    <source>
        <strain evidence="5">927/4 GUTat10.1</strain>
    </source>
</reference>
<evidence type="ECO:0000250" key="1"/>
<evidence type="ECO:0000250" key="2">
    <source>
        <dbReference type="UniProtKB" id="B3A0L9"/>
    </source>
</evidence>
<evidence type="ECO:0000255" key="3"/>
<evidence type="ECO:0000312" key="4">
    <source>
        <dbReference type="EMBL" id="EAN76917.1"/>
    </source>
</evidence>
<evidence type="ECO:0000312" key="5">
    <source>
        <dbReference type="Proteomes" id="UP000008524"/>
    </source>
</evidence>
<feature type="chain" id="PRO_0000413851" description="Phosphatidylinositol:ceramide inositolphosphotransferase">
    <location>
        <begin position="1"/>
        <end position="355"/>
    </location>
</feature>
<feature type="topological domain" description="Cytoplasmic" evidence="3">
    <location>
        <begin position="1"/>
        <end position="44"/>
    </location>
</feature>
<feature type="transmembrane region" description="Helical" evidence="3">
    <location>
        <begin position="45"/>
        <end position="65"/>
    </location>
</feature>
<feature type="topological domain" description="Extracellular" evidence="3">
    <location>
        <begin position="66"/>
        <end position="89"/>
    </location>
</feature>
<feature type="transmembrane region" description="Helical" evidence="3">
    <location>
        <begin position="90"/>
        <end position="110"/>
    </location>
</feature>
<feature type="topological domain" description="Cytoplasmic" evidence="3">
    <location>
        <begin position="111"/>
        <end position="165"/>
    </location>
</feature>
<feature type="transmembrane region" description="Helical" evidence="3">
    <location>
        <begin position="166"/>
        <end position="186"/>
    </location>
</feature>
<feature type="topological domain" description="Extracellular" evidence="3">
    <location>
        <begin position="187"/>
        <end position="205"/>
    </location>
</feature>
<feature type="transmembrane region" description="Helical" evidence="3">
    <location>
        <begin position="206"/>
        <end position="226"/>
    </location>
</feature>
<feature type="topological domain" description="Cytoplasmic" evidence="3">
    <location>
        <begin position="227"/>
        <end position="251"/>
    </location>
</feature>
<feature type="transmembrane region" description="Helical" evidence="3">
    <location>
        <begin position="252"/>
        <end position="272"/>
    </location>
</feature>
<feature type="topological domain" description="Extracellular" evidence="3">
    <location>
        <begin position="273"/>
        <end position="275"/>
    </location>
</feature>
<feature type="transmembrane region" description="Helical" evidence="3">
    <location>
        <begin position="276"/>
        <end position="296"/>
    </location>
</feature>
<feature type="topological domain" description="Cytoplasmic" evidence="3">
    <location>
        <begin position="297"/>
        <end position="355"/>
    </location>
</feature>
<feature type="active site" evidence="1">
    <location>
        <position position="228"/>
    </location>
</feature>
<feature type="active site" evidence="1">
    <location>
        <position position="271"/>
    </location>
</feature>
<feature type="active site" evidence="1">
    <location>
        <position position="275"/>
    </location>
</feature>
<dbReference type="EC" id="2.7.8.-" evidence="2"/>
<dbReference type="EMBL" id="CM000207">
    <property type="protein sequence ID" value="EAN76917.1"/>
    <property type="molecule type" value="Genomic_DNA"/>
</dbReference>
<dbReference type="RefSeq" id="XP_827247.1">
    <property type="nucleotide sequence ID" value="XM_822154.1"/>
</dbReference>
<dbReference type="STRING" id="185431.Q38E53"/>
<dbReference type="SwissPalm" id="Q38E53"/>
<dbReference type="PaxDb" id="5691-EAN76917"/>
<dbReference type="GeneID" id="3660636"/>
<dbReference type="KEGG" id="tbr:Tb09.211.1030"/>
<dbReference type="eggNOG" id="KOG3058">
    <property type="taxonomic scope" value="Eukaryota"/>
</dbReference>
<dbReference type="InParanoid" id="Q38E53"/>
<dbReference type="OrthoDB" id="422827at2759"/>
<dbReference type="Proteomes" id="UP000008524">
    <property type="component" value="Chromosome 9"/>
</dbReference>
<dbReference type="GO" id="GO:0005789">
    <property type="term" value="C:endoplasmic reticulum membrane"/>
    <property type="evidence" value="ECO:0000318"/>
    <property type="project" value="GO_Central"/>
</dbReference>
<dbReference type="GO" id="GO:0000139">
    <property type="term" value="C:Golgi membrane"/>
    <property type="evidence" value="ECO:0000318"/>
    <property type="project" value="GO_Central"/>
</dbReference>
<dbReference type="GO" id="GO:0016020">
    <property type="term" value="C:membrane"/>
    <property type="evidence" value="ECO:0000247"/>
    <property type="project" value="GeneDB"/>
</dbReference>
<dbReference type="GO" id="GO:0005886">
    <property type="term" value="C:plasma membrane"/>
    <property type="evidence" value="ECO:0000318"/>
    <property type="project" value="GO_Central"/>
</dbReference>
<dbReference type="GO" id="GO:0047493">
    <property type="term" value="F:ceramide cholinephosphotransferase activity"/>
    <property type="evidence" value="ECO:0000247"/>
    <property type="project" value="GeneDB"/>
</dbReference>
<dbReference type="GO" id="GO:0016301">
    <property type="term" value="F:kinase activity"/>
    <property type="evidence" value="ECO:0007669"/>
    <property type="project" value="UniProtKB-KW"/>
</dbReference>
<dbReference type="GO" id="GO:0033188">
    <property type="term" value="F:sphingomyelin synthase activity"/>
    <property type="evidence" value="ECO:0000318"/>
    <property type="project" value="GO_Central"/>
</dbReference>
<dbReference type="GO" id="GO:0046513">
    <property type="term" value="P:ceramide biosynthetic process"/>
    <property type="evidence" value="ECO:0000318"/>
    <property type="project" value="GO_Central"/>
</dbReference>
<dbReference type="GO" id="GO:0006686">
    <property type="term" value="P:sphingomyelin biosynthetic process"/>
    <property type="evidence" value="ECO:0000247"/>
    <property type="project" value="GeneDB"/>
</dbReference>
<dbReference type="InterPro" id="IPR045221">
    <property type="entry name" value="Sphingomyelin_synth-like"/>
</dbReference>
<dbReference type="InterPro" id="IPR025749">
    <property type="entry name" value="Sphingomyelin_synth-like_dom"/>
</dbReference>
<dbReference type="PANTHER" id="PTHR21290:SF25">
    <property type="entry name" value="SPHINGOMYELIN SYNTHASE-RELATED PROTEIN 1"/>
    <property type="match status" value="1"/>
</dbReference>
<dbReference type="PANTHER" id="PTHR21290">
    <property type="entry name" value="SPHINGOMYELIN SYNTHETASE"/>
    <property type="match status" value="1"/>
</dbReference>
<dbReference type="Pfam" id="PF14360">
    <property type="entry name" value="PAP2_C"/>
    <property type="match status" value="1"/>
</dbReference>
<comment type="function">
    <text evidence="1">Bidirectional lipid inositolphosphotransferase capable of converting phosphatidylinositol (PI) and ceramide to inositol-phosphorylceramide (IPC) and diacylglycerol (DAG) and vice versa. Direction is dependent on the relative concentrations of DAG and ceramide as phosphoinositol acceptors. Does not function strictly as a SM synthase. Essential for viability of the pathogenic bloodstream stage of this human protozoan parasite and, consequently, can be considered as potential drug target (By similarity).</text>
</comment>
<comment type="subcellular location">
    <subcellularLocation>
        <location evidence="3">Membrane</location>
        <topology evidence="3">Multi-pass membrane protein</topology>
    </subcellularLocation>
</comment>
<comment type="similarity">
    <text evidence="3">Belongs to the sphingomyelin synthase family.</text>
</comment>
<accession>Q38E53</accession>
<keyword id="KW-0418">Kinase</keyword>
<keyword id="KW-0443">Lipid metabolism</keyword>
<keyword id="KW-0472">Membrane</keyword>
<keyword id="KW-1185">Reference proteome</keyword>
<keyword id="KW-0746">Sphingolipid metabolism</keyword>
<keyword id="KW-0808">Transferase</keyword>
<keyword id="KW-0812">Transmembrane</keyword>
<keyword id="KW-1133">Transmembrane helix</keyword>